<gene>
    <name type="primary">NHX3</name>
    <name type="ordered locus">At3g06370</name>
    <name type="ORF">F24P17.16</name>
</gene>
<proteinExistence type="evidence at protein level"/>
<comment type="function">
    <text evidence="1">May act in low affinity electroneutral exchange of protons for cations such as Na(+) or K(+) across membranes. May also exchange Li(+) and Cs(+) with a lower affinity.</text>
</comment>
<comment type="catalytic activity">
    <reaction evidence="1">
        <text>Na(+)(in) + H(+)(out) = Na(+)(out) + H(+)(in)</text>
        <dbReference type="Rhea" id="RHEA:29419"/>
        <dbReference type="ChEBI" id="CHEBI:15378"/>
        <dbReference type="ChEBI" id="CHEBI:29101"/>
    </reaction>
</comment>
<comment type="catalytic activity">
    <reaction evidence="1">
        <text>K(+)(in) + H(+)(out) = K(+)(out) + H(+)(in)</text>
        <dbReference type="Rhea" id="RHEA:29467"/>
        <dbReference type="ChEBI" id="CHEBI:15378"/>
        <dbReference type="ChEBI" id="CHEBI:29103"/>
    </reaction>
</comment>
<comment type="subcellular location">
    <subcellularLocation>
        <location evidence="4">Vacuole membrane</location>
        <topology evidence="2">Multi-pass membrane protein</topology>
    </subcellularLocation>
    <text>Tonoplast.</text>
</comment>
<comment type="tissue specificity">
    <text evidence="3">Expressed in roots.</text>
</comment>
<comment type="similarity">
    <text evidence="5">Belongs to the monovalent cation:proton antiporter 1 (CPA1) transporter (TC 2.A.36) family.</text>
</comment>
<comment type="sequence caution" evidence="5">
    <conflict type="erroneous gene model prediction">
        <sequence resource="EMBL-CDS" id="AAF08577"/>
    </conflict>
</comment>
<accession>Q84WG1</accession>
<accession>Q9SQU0</accession>
<organism>
    <name type="scientific">Arabidopsis thaliana</name>
    <name type="common">Mouse-ear cress</name>
    <dbReference type="NCBI Taxonomy" id="3702"/>
    <lineage>
        <taxon>Eukaryota</taxon>
        <taxon>Viridiplantae</taxon>
        <taxon>Streptophyta</taxon>
        <taxon>Embryophyta</taxon>
        <taxon>Tracheophyta</taxon>
        <taxon>Spermatophyta</taxon>
        <taxon>Magnoliopsida</taxon>
        <taxon>eudicotyledons</taxon>
        <taxon>Gunneridae</taxon>
        <taxon>Pentapetalae</taxon>
        <taxon>rosids</taxon>
        <taxon>malvids</taxon>
        <taxon>Brassicales</taxon>
        <taxon>Brassicaceae</taxon>
        <taxon>Camelineae</taxon>
        <taxon>Arabidopsis</taxon>
    </lineage>
</organism>
<dbReference type="EMBL" id="AC011623">
    <property type="protein sequence ID" value="AAF08577.1"/>
    <property type="status" value="ALT_SEQ"/>
    <property type="molecule type" value="Genomic_DNA"/>
</dbReference>
<dbReference type="EMBL" id="CP002686">
    <property type="protein sequence ID" value="AEE74383.1"/>
    <property type="molecule type" value="Genomic_DNA"/>
</dbReference>
<dbReference type="EMBL" id="BT003855">
    <property type="protein sequence ID" value="AAO41905.1"/>
    <property type="molecule type" value="mRNA"/>
</dbReference>
<dbReference type="RefSeq" id="NP_001327377.1">
    <property type="nucleotide sequence ID" value="NM_001337652.1"/>
</dbReference>
<dbReference type="RefSeq" id="NP_001327379.1">
    <property type="nucleotide sequence ID" value="NM_001337651.1"/>
</dbReference>
<dbReference type="RefSeq" id="NP_187288.2">
    <property type="nucleotide sequence ID" value="NM_111512.3"/>
</dbReference>
<dbReference type="SMR" id="Q84WG1"/>
<dbReference type="BioGRID" id="5146">
    <property type="interactions" value="2"/>
</dbReference>
<dbReference type="FunCoup" id="Q84WG1">
    <property type="interactions" value="1"/>
</dbReference>
<dbReference type="IntAct" id="Q84WG1">
    <property type="interactions" value="2"/>
</dbReference>
<dbReference type="STRING" id="3702.Q84WG1"/>
<dbReference type="GlyCosmos" id="Q84WG1">
    <property type="glycosylation" value="3 sites, No reported glycans"/>
</dbReference>
<dbReference type="GlyGen" id="Q84WG1">
    <property type="glycosylation" value="3 sites"/>
</dbReference>
<dbReference type="iPTMnet" id="Q84WG1"/>
<dbReference type="PaxDb" id="3702-AT3G06370.1"/>
<dbReference type="EnsemblPlants" id="AT3G06370.1">
    <property type="protein sequence ID" value="AT3G06370.1"/>
    <property type="gene ID" value="AT3G06370"/>
</dbReference>
<dbReference type="GeneID" id="819811"/>
<dbReference type="Gramene" id="AT3G06370.1">
    <property type="protein sequence ID" value="AT3G06370.1"/>
    <property type="gene ID" value="AT3G06370"/>
</dbReference>
<dbReference type="KEGG" id="ath:AT3G06370"/>
<dbReference type="Araport" id="AT3G06370"/>
<dbReference type="TAIR" id="AT3G06370">
    <property type="gene designation" value="NHX4"/>
</dbReference>
<dbReference type="eggNOG" id="KOG1965">
    <property type="taxonomic scope" value="Eukaryota"/>
</dbReference>
<dbReference type="HOGENOM" id="CLU_005912_11_2_1"/>
<dbReference type="InParanoid" id="Q84WG1"/>
<dbReference type="PhylomeDB" id="Q84WG1"/>
<dbReference type="PRO" id="PR:Q84WG1"/>
<dbReference type="Proteomes" id="UP000006548">
    <property type="component" value="Chromosome 3"/>
</dbReference>
<dbReference type="ExpressionAtlas" id="Q84WG1">
    <property type="expression patterns" value="baseline and differential"/>
</dbReference>
<dbReference type="GO" id="GO:0000325">
    <property type="term" value="C:plant-type vacuole"/>
    <property type="evidence" value="ECO:0007005"/>
    <property type="project" value="TAIR"/>
</dbReference>
<dbReference type="GO" id="GO:0005774">
    <property type="term" value="C:vacuolar membrane"/>
    <property type="evidence" value="ECO:0000314"/>
    <property type="project" value="TAIR"/>
</dbReference>
<dbReference type="GO" id="GO:0015385">
    <property type="term" value="F:sodium:proton antiporter activity"/>
    <property type="evidence" value="ECO:0007669"/>
    <property type="project" value="InterPro"/>
</dbReference>
<dbReference type="GO" id="GO:0006813">
    <property type="term" value="P:potassium ion transport"/>
    <property type="evidence" value="ECO:0007669"/>
    <property type="project" value="UniProtKB-KW"/>
</dbReference>
<dbReference type="GO" id="GO:0006885">
    <property type="term" value="P:regulation of pH"/>
    <property type="evidence" value="ECO:0007669"/>
    <property type="project" value="InterPro"/>
</dbReference>
<dbReference type="GO" id="GO:0009651">
    <property type="term" value="P:response to salt stress"/>
    <property type="evidence" value="ECO:0000315"/>
    <property type="project" value="TAIR"/>
</dbReference>
<dbReference type="Gene3D" id="6.10.140.1330">
    <property type="match status" value="1"/>
</dbReference>
<dbReference type="InterPro" id="IPR018422">
    <property type="entry name" value="Cation/H_exchanger_CPA1"/>
</dbReference>
<dbReference type="InterPro" id="IPR006153">
    <property type="entry name" value="Cation/H_exchanger_TM"/>
</dbReference>
<dbReference type="InterPro" id="IPR004709">
    <property type="entry name" value="NaH_exchanger"/>
</dbReference>
<dbReference type="PANTHER" id="PTHR10110">
    <property type="entry name" value="SODIUM/HYDROGEN EXCHANGER"/>
    <property type="match status" value="1"/>
</dbReference>
<dbReference type="PANTHER" id="PTHR10110:SF159">
    <property type="entry name" value="SODIUM_HYDROGEN EXCHANGER 3"/>
    <property type="match status" value="1"/>
</dbReference>
<dbReference type="Pfam" id="PF00999">
    <property type="entry name" value="Na_H_Exchanger"/>
    <property type="match status" value="1"/>
</dbReference>
<dbReference type="PRINTS" id="PR01084">
    <property type="entry name" value="NAHEXCHNGR"/>
</dbReference>
<feature type="chain" id="PRO_0000052374" description="Sodium/hydrogen exchanger 3">
    <location>
        <begin position="1"/>
        <end position="503"/>
    </location>
</feature>
<feature type="topological domain" description="Cytoplasmic" evidence="2">
    <location>
        <begin position="1"/>
        <end position="22"/>
    </location>
</feature>
<feature type="transmembrane region" description="Helical" evidence="2">
    <location>
        <begin position="23"/>
        <end position="43"/>
    </location>
</feature>
<feature type="topological domain" description="Vacuolar" evidence="2">
    <location>
        <begin position="44"/>
        <end position="51"/>
    </location>
</feature>
<feature type="transmembrane region" description="Helical" evidence="2">
    <location>
        <begin position="52"/>
        <end position="72"/>
    </location>
</feature>
<feature type="topological domain" description="Cytoplasmic" evidence="2">
    <location>
        <begin position="73"/>
        <end position="76"/>
    </location>
</feature>
<feature type="intramembrane region" description="Helical" evidence="2">
    <location>
        <begin position="77"/>
        <end position="97"/>
    </location>
</feature>
<feature type="topological domain" description="Cytoplasmic" evidence="2">
    <location>
        <begin position="98"/>
        <end position="109"/>
    </location>
</feature>
<feature type="transmembrane region" description="Helical" evidence="2">
    <location>
        <begin position="110"/>
        <end position="130"/>
    </location>
</feature>
<feature type="topological domain" description="Vacuolar" evidence="2">
    <location>
        <begin position="131"/>
        <end position="138"/>
    </location>
</feature>
<feature type="transmembrane region" description="Helical" evidence="2">
    <location>
        <begin position="139"/>
        <end position="159"/>
    </location>
</feature>
<feature type="topological domain" description="Cytoplasmic" evidence="2">
    <location>
        <begin position="160"/>
        <end position="174"/>
    </location>
</feature>
<feature type="transmembrane region" description="Helical" evidence="2">
    <location>
        <begin position="175"/>
        <end position="195"/>
    </location>
</feature>
<feature type="topological domain" description="Vacuolar" evidence="2">
    <location>
        <begin position="196"/>
        <end position="219"/>
    </location>
</feature>
<feature type="transmembrane region" description="Helical" evidence="2">
    <location>
        <begin position="220"/>
        <end position="240"/>
    </location>
</feature>
<feature type="topological domain" description="Cytoplasmic" evidence="2">
    <location>
        <begin position="241"/>
        <end position="265"/>
    </location>
</feature>
<feature type="transmembrane region" description="Helical" evidence="2">
    <location>
        <begin position="266"/>
        <end position="286"/>
    </location>
</feature>
<feature type="topological domain" description="Vacuolar" evidence="2">
    <location>
        <begin position="287"/>
        <end position="305"/>
    </location>
</feature>
<feature type="transmembrane region" description="Helical" evidence="2">
    <location>
        <begin position="306"/>
        <end position="326"/>
    </location>
</feature>
<feature type="topological domain" description="Cytoplasmic" evidence="2">
    <location>
        <begin position="327"/>
        <end position="345"/>
    </location>
</feature>
<feature type="transmembrane region" description="Helical" evidence="2">
    <location>
        <begin position="346"/>
        <end position="366"/>
    </location>
</feature>
<feature type="topological domain" description="Vacuolar" evidence="2">
    <location>
        <begin position="367"/>
        <end position="383"/>
    </location>
</feature>
<feature type="transmembrane region" description="Helical" evidence="2">
    <location>
        <begin position="384"/>
        <end position="406"/>
    </location>
</feature>
<feature type="topological domain" description="Cytoplasmic" evidence="2">
    <location>
        <begin position="407"/>
        <end position="416"/>
    </location>
</feature>
<feature type="transmembrane region" description="Helical" evidence="2">
    <location>
        <begin position="417"/>
        <end position="437"/>
    </location>
</feature>
<feature type="topological domain" description="Vacuolar" evidence="2">
    <location>
        <begin position="438"/>
        <end position="503"/>
    </location>
</feature>
<feature type="glycosylation site" description="N-linked (GlcNAc...) asparagine" evidence="2">
    <location>
        <position position="50"/>
    </location>
</feature>
<feature type="glycosylation site" description="N-linked (GlcNAc...) asparagine" evidence="2">
    <location>
        <position position="293"/>
    </location>
</feature>
<feature type="glycosylation site" description="N-linked (GlcNAc...) asparagine" evidence="2">
    <location>
        <position position="368"/>
    </location>
</feature>
<feature type="sequence conflict" description="In Ref. 3; AAO41905." evidence="5" ref="3">
    <original>K</original>
    <variation>E</variation>
    <location>
        <position position="102"/>
    </location>
</feature>
<feature type="sequence conflict" description="In Ref. 3; AAO41905." evidence="5" ref="3">
    <original>V</original>
    <variation>F</variation>
    <location>
        <position position="321"/>
    </location>
</feature>
<keyword id="KW-0050">Antiport</keyword>
<keyword id="KW-0325">Glycoprotein</keyword>
<keyword id="KW-0406">Ion transport</keyword>
<keyword id="KW-0472">Membrane</keyword>
<keyword id="KW-0630">Potassium</keyword>
<keyword id="KW-0633">Potassium transport</keyword>
<keyword id="KW-1185">Reference proteome</keyword>
<keyword id="KW-0915">Sodium</keyword>
<keyword id="KW-0739">Sodium transport</keyword>
<keyword id="KW-0812">Transmembrane</keyword>
<keyword id="KW-1133">Transmembrane helix</keyword>
<keyword id="KW-0813">Transport</keyword>
<keyword id="KW-0926">Vacuole</keyword>
<sequence length="503" mass="55606">MVIGLSTMLEKTEALFASDHASVVSMNLFVALLCACIVLGHLLEETRWMNESITALIIGSCTGIVILLISGGKSSRILVFSEDLFFIYLLPPIIFNAGFQVKKKQFFRNFMTIMLFGAIGTLISFVIISFGAKHLFEKMNIGDLTIADYLAIGAIFSATDSVCTLQVLNQDETPLLYSLVFGEGVVNDATSVVLFNAIQRFDLTNINSAIALEFAGNFFYLFILSTALGVAAGLLSAFVIKKLYIGRHSTDREVALMMLLAYLSYMLAELFHLSSILTVFFCGIVMSHYTWHNVTDKSKVTTKHTFAAMSFLAEIFIFLYVGMDALDIEKWDVVRNSPGQSIGVSSILLGLILLGRAAFVFPLSFLSNLTKSSPDEKIDLKKQVTIWWAGLMRGAVSMALAYNQFTTSGHTKVLGNAIMITSTITVVLFSTVVFGLLTKPLVKHLQPSSKQSSTTALQITLRSSFHDPILHEPLLSTQGQSEYDPEQHVSFRMFWKSPSRFTH</sequence>
<reference key="1">
    <citation type="journal article" date="2000" name="Nature">
        <title>Sequence and analysis of chromosome 3 of the plant Arabidopsis thaliana.</title>
        <authorList>
            <person name="Salanoubat M."/>
            <person name="Lemcke K."/>
            <person name="Rieger M."/>
            <person name="Ansorge W."/>
            <person name="Unseld M."/>
            <person name="Fartmann B."/>
            <person name="Valle G."/>
            <person name="Bloecker H."/>
            <person name="Perez-Alonso M."/>
            <person name="Obermaier B."/>
            <person name="Delseny M."/>
            <person name="Boutry M."/>
            <person name="Grivell L.A."/>
            <person name="Mache R."/>
            <person name="Puigdomenech P."/>
            <person name="De Simone V."/>
            <person name="Choisne N."/>
            <person name="Artiguenave F."/>
            <person name="Robert C."/>
            <person name="Brottier P."/>
            <person name="Wincker P."/>
            <person name="Cattolico L."/>
            <person name="Weissenbach J."/>
            <person name="Saurin W."/>
            <person name="Quetier F."/>
            <person name="Schaefer M."/>
            <person name="Mueller-Auer S."/>
            <person name="Gabel C."/>
            <person name="Fuchs M."/>
            <person name="Benes V."/>
            <person name="Wurmbach E."/>
            <person name="Drzonek H."/>
            <person name="Erfle H."/>
            <person name="Jordan N."/>
            <person name="Bangert S."/>
            <person name="Wiedelmann R."/>
            <person name="Kranz H."/>
            <person name="Voss H."/>
            <person name="Holland R."/>
            <person name="Brandt P."/>
            <person name="Nyakatura G."/>
            <person name="Vezzi A."/>
            <person name="D'Angelo M."/>
            <person name="Pallavicini A."/>
            <person name="Toppo S."/>
            <person name="Simionati B."/>
            <person name="Conrad A."/>
            <person name="Hornischer K."/>
            <person name="Kauer G."/>
            <person name="Loehnert T.-H."/>
            <person name="Nordsiek G."/>
            <person name="Reichelt J."/>
            <person name="Scharfe M."/>
            <person name="Schoen O."/>
            <person name="Bargues M."/>
            <person name="Terol J."/>
            <person name="Climent J."/>
            <person name="Navarro P."/>
            <person name="Collado C."/>
            <person name="Perez-Perez A."/>
            <person name="Ottenwaelder B."/>
            <person name="Duchemin D."/>
            <person name="Cooke R."/>
            <person name="Laudie M."/>
            <person name="Berger-Llauro C."/>
            <person name="Purnelle B."/>
            <person name="Masuy D."/>
            <person name="de Haan M."/>
            <person name="Maarse A.C."/>
            <person name="Alcaraz J.-P."/>
            <person name="Cottet A."/>
            <person name="Casacuberta E."/>
            <person name="Monfort A."/>
            <person name="Argiriou A."/>
            <person name="Flores M."/>
            <person name="Liguori R."/>
            <person name="Vitale D."/>
            <person name="Mannhaupt G."/>
            <person name="Haase D."/>
            <person name="Schoof H."/>
            <person name="Rudd S."/>
            <person name="Zaccaria P."/>
            <person name="Mewes H.-W."/>
            <person name="Mayer K.F.X."/>
            <person name="Kaul S."/>
            <person name="Town C.D."/>
            <person name="Koo H.L."/>
            <person name="Tallon L.J."/>
            <person name="Jenkins J."/>
            <person name="Rooney T."/>
            <person name="Rizzo M."/>
            <person name="Walts A."/>
            <person name="Utterback T."/>
            <person name="Fujii C.Y."/>
            <person name="Shea T.P."/>
            <person name="Creasy T.H."/>
            <person name="Haas B."/>
            <person name="Maiti R."/>
            <person name="Wu D."/>
            <person name="Peterson J."/>
            <person name="Van Aken S."/>
            <person name="Pai G."/>
            <person name="Militscher J."/>
            <person name="Sellers P."/>
            <person name="Gill J.E."/>
            <person name="Feldblyum T.V."/>
            <person name="Preuss D."/>
            <person name="Lin X."/>
            <person name="Nierman W.C."/>
            <person name="Salzberg S.L."/>
            <person name="White O."/>
            <person name="Venter J.C."/>
            <person name="Fraser C.M."/>
            <person name="Kaneko T."/>
            <person name="Nakamura Y."/>
            <person name="Sato S."/>
            <person name="Kato T."/>
            <person name="Asamizu E."/>
            <person name="Sasamoto S."/>
            <person name="Kimura T."/>
            <person name="Idesawa K."/>
            <person name="Kawashima K."/>
            <person name="Kishida Y."/>
            <person name="Kiyokawa C."/>
            <person name="Kohara M."/>
            <person name="Matsumoto M."/>
            <person name="Matsuno A."/>
            <person name="Muraki A."/>
            <person name="Nakayama S."/>
            <person name="Nakazaki N."/>
            <person name="Shinpo S."/>
            <person name="Takeuchi C."/>
            <person name="Wada T."/>
            <person name="Watanabe A."/>
            <person name="Yamada M."/>
            <person name="Yasuda M."/>
            <person name="Tabata S."/>
        </authorList>
    </citation>
    <scope>NUCLEOTIDE SEQUENCE [LARGE SCALE GENOMIC DNA]</scope>
    <source>
        <strain>cv. Columbia</strain>
    </source>
</reference>
<reference key="2">
    <citation type="journal article" date="2017" name="Plant J.">
        <title>Araport11: a complete reannotation of the Arabidopsis thaliana reference genome.</title>
        <authorList>
            <person name="Cheng C.Y."/>
            <person name="Krishnakumar V."/>
            <person name="Chan A.P."/>
            <person name="Thibaud-Nissen F."/>
            <person name="Schobel S."/>
            <person name="Town C.D."/>
        </authorList>
    </citation>
    <scope>GENOME REANNOTATION</scope>
    <source>
        <strain>cv. Columbia</strain>
    </source>
</reference>
<reference key="3">
    <citation type="journal article" date="2003" name="Science">
        <title>Empirical analysis of transcriptional activity in the Arabidopsis genome.</title>
        <authorList>
            <person name="Yamada K."/>
            <person name="Lim J."/>
            <person name="Dale J.M."/>
            <person name="Chen H."/>
            <person name="Shinn P."/>
            <person name="Palm C.J."/>
            <person name="Southwick A.M."/>
            <person name="Wu H.C."/>
            <person name="Kim C.J."/>
            <person name="Nguyen M."/>
            <person name="Pham P.K."/>
            <person name="Cheuk R.F."/>
            <person name="Karlin-Newmann G."/>
            <person name="Liu S.X."/>
            <person name="Lam B."/>
            <person name="Sakano H."/>
            <person name="Wu T."/>
            <person name="Yu G."/>
            <person name="Miranda M."/>
            <person name="Quach H.L."/>
            <person name="Tripp M."/>
            <person name="Chang C.H."/>
            <person name="Lee J.M."/>
            <person name="Toriumi M.J."/>
            <person name="Chan M.M."/>
            <person name="Tang C.C."/>
            <person name="Onodera C.S."/>
            <person name="Deng J.M."/>
            <person name="Akiyama K."/>
            <person name="Ansari Y."/>
            <person name="Arakawa T."/>
            <person name="Banh J."/>
            <person name="Banno F."/>
            <person name="Bowser L."/>
            <person name="Brooks S.Y."/>
            <person name="Carninci P."/>
            <person name="Chao Q."/>
            <person name="Choy N."/>
            <person name="Enju A."/>
            <person name="Goldsmith A.D."/>
            <person name="Gurjal M."/>
            <person name="Hansen N.F."/>
            <person name="Hayashizaki Y."/>
            <person name="Johnson-Hopson C."/>
            <person name="Hsuan V.W."/>
            <person name="Iida K."/>
            <person name="Karnes M."/>
            <person name="Khan S."/>
            <person name="Koesema E."/>
            <person name="Ishida J."/>
            <person name="Jiang P.X."/>
            <person name="Jones T."/>
            <person name="Kawai J."/>
            <person name="Kamiya A."/>
            <person name="Meyers C."/>
            <person name="Nakajima M."/>
            <person name="Narusaka M."/>
            <person name="Seki M."/>
            <person name="Sakurai T."/>
            <person name="Satou M."/>
            <person name="Tamse R."/>
            <person name="Vaysberg M."/>
            <person name="Wallender E.K."/>
            <person name="Wong C."/>
            <person name="Yamamura Y."/>
            <person name="Yuan S."/>
            <person name="Shinozaki K."/>
            <person name="Davis R.W."/>
            <person name="Theologis A."/>
            <person name="Ecker J.R."/>
        </authorList>
    </citation>
    <scope>NUCLEOTIDE SEQUENCE [LARGE SCALE MRNA]</scope>
    <source>
        <strain>cv. Columbia</strain>
    </source>
</reference>
<reference key="4">
    <citation type="journal article" date="2002" name="Plant J.">
        <title>Differential expression and function of Arabidopsis thaliana NHX Na(+)/H(+) antiporters in the salt stress response.</title>
        <authorList>
            <person name="Yokoi S."/>
            <person name="Quintero F.J."/>
            <person name="Cubero B."/>
            <person name="Ruiz M.T."/>
            <person name="Bressan R.A."/>
            <person name="Hasegawa P.M."/>
            <person name="Pardo J.M."/>
        </authorList>
    </citation>
    <scope>TISSUE SPECIFICITY</scope>
    <source>
        <strain>cv. Landsberg erecta</strain>
    </source>
</reference>
<reference key="5">
    <citation type="journal article" date="2007" name="Mol. Cell. Proteomics">
        <title>A proteomics dissection of Arabidopsis thaliana vacuoles isolated from cell culture.</title>
        <authorList>
            <person name="Jaquinod M."/>
            <person name="Villiers F."/>
            <person name="Kieffer-Jaquinod S."/>
            <person name="Hugouvieux V."/>
            <person name="Bruley C."/>
            <person name="Garin J."/>
            <person name="Bourguignon J."/>
        </authorList>
    </citation>
    <scope>IDENTIFICATION BY MASS SPECTROMETRY</scope>
    <scope>SUBCELLULAR LOCATION [LARGE SCALE ANALYSIS]</scope>
</reference>
<evidence type="ECO:0000250" key="1">
    <source>
        <dbReference type="UniProtKB" id="Q68KI4"/>
    </source>
</evidence>
<evidence type="ECO:0000255" key="2"/>
<evidence type="ECO:0000269" key="3">
    <source>
    </source>
</evidence>
<evidence type="ECO:0000269" key="4">
    <source>
    </source>
</evidence>
<evidence type="ECO:0000305" key="5"/>
<protein>
    <recommendedName>
        <fullName>Sodium/hydrogen exchanger 3</fullName>
    </recommendedName>
    <alternativeName>
        <fullName>Na(+)/H(+) exchanger 3</fullName>
        <shortName>NHE-3</shortName>
    </alternativeName>
</protein>
<name>NHX3_ARATH</name>